<gene>
    <name evidence="2" type="primary">NEC2</name>
    <name type="ordered locus">UL50</name>
</gene>
<comment type="function">
    <text evidence="1 2 4">Plays an essential role in virion nuclear egress, the first step of virion release from infected cell. Within the host nucleus, NEC1 interacts with the newly formed capsid through the vertexes and directs it to the inner nuclear membrane by associating with NEC2. Induces the budding of the capsid at the inner nuclear membrane as well as its envelopment into the perinuclear space. There, the NEC1/NEC2 complex promotes the fusion of the enveloped capsid with the outer nuclear membrane and the subsequent release of the viral capsid into the cytoplasm where it will reach the secondary budding sites in the host Golgi or trans-Golgi network (By similarity). Inhibits host ISGylation and subsequent innate antiviral response by targeting host UBA7 for proteasomal degradation (By similarity).</text>
</comment>
<comment type="subunit">
    <text evidence="1 2 5 6">Forms a heterohexameric complex with NEC1 (PubMed:26511021, PubMed:31980459). Interacts with host UBA7 and RNF170; this interaction promotes UBA7 proteasomal degradation (By similarity).</text>
</comment>
<comment type="subcellular location">
    <subcellularLocation>
        <location evidence="2 4 5 6">Host nucleus inner membrane</location>
        <topology evidence="2">Single-pass membrane protein</topology>
    </subcellularLocation>
    <text evidence="2">Also localizes at the transient membrane of perinuclear virions.</text>
</comment>
<comment type="PTM">
    <text evidence="2 4">Phosphorylated (By similarity). Phosphorylation by viral kinase UL97 at Ser-216 plays an important role for correct viral nuclear egress complex (NEC) localization (PubMed:25339763).</text>
</comment>
<comment type="similarity">
    <text evidence="2">Belongs to the herpesviridae NEC2 protein family.</text>
</comment>
<dbReference type="EMBL" id="M17209">
    <property type="protein sequence ID" value="AAA46004.1"/>
    <property type="molecule type" value="Genomic_DNA"/>
</dbReference>
<dbReference type="EMBL" id="X17403">
    <property type="protein sequence ID" value="CAA35409.1"/>
    <property type="molecule type" value="Genomic_DNA"/>
</dbReference>
<dbReference type="EMBL" id="BK000394">
    <property type="protein sequence ID" value="DAA00155.1"/>
    <property type="molecule type" value="Genomic_DNA"/>
</dbReference>
<dbReference type="PIR" id="S09813">
    <property type="entry name" value="S09813"/>
</dbReference>
<dbReference type="PDB" id="5DOB">
    <property type="method" value="X-ray"/>
    <property type="resolution" value="2.47 A"/>
    <property type="chains" value="B=4-168"/>
</dbReference>
<dbReference type="PDB" id="6T3X">
    <property type="method" value="X-ray"/>
    <property type="resolution" value="1.48 A"/>
    <property type="chains" value="A/C=1-171"/>
</dbReference>
<dbReference type="PDBsum" id="5DOB"/>
<dbReference type="PDBsum" id="6T3X"/>
<dbReference type="SMR" id="P16791"/>
<dbReference type="iPTMnet" id="P16791"/>
<dbReference type="Proteomes" id="UP000008991">
    <property type="component" value="Segment"/>
</dbReference>
<dbReference type="Proteomes" id="UP000008992">
    <property type="component" value="Segment"/>
</dbReference>
<dbReference type="GO" id="GO:0044201">
    <property type="term" value="C:host cell nuclear inner membrane"/>
    <property type="evidence" value="ECO:0007669"/>
    <property type="project" value="UniProtKB-SubCell"/>
</dbReference>
<dbReference type="GO" id="GO:0016020">
    <property type="term" value="C:membrane"/>
    <property type="evidence" value="ECO:0007669"/>
    <property type="project" value="UniProtKB-KW"/>
</dbReference>
<dbReference type="HAMAP" id="MF_04024">
    <property type="entry name" value="HSV_NEC2"/>
    <property type="match status" value="1"/>
</dbReference>
<dbReference type="InterPro" id="IPR007626">
    <property type="entry name" value="Herpesvirus_viron_egress-type"/>
</dbReference>
<dbReference type="Pfam" id="PF04541">
    <property type="entry name" value="Herpes_U34"/>
    <property type="match status" value="1"/>
</dbReference>
<sequence length="397" mass="42901">MEMNKVLHQDLVQATRRILKLGPSELRVTDAGLICKNPNYSVCDAMLKTDTVYCVEYLLSYWESRTDHVPCFIFKNTGCAVSLCCFVRAPVKLVSPARHVGEFNVLKVNESLIVTLKDIEEIKPSAYGVLTKCVVRKSNSASVFNIELIAFGPENEGEYENLLRELYAKKAASTSLAVRNHVTVSSHSGSGPSLWRARMSAALTRTAGKRSSRTASPPPPPRHPSCSPTMVAAGGAAAGPRPPPPPMAAGSWRLCRCEACMGRCGCASEGDADEEEEELLALAGEGKAAAAAAGQDVGGSARRPLEEHVSRRRGVSTHHRHPPSPPCAPSLERTGYRWAPSSWWRARSGPSRPQSGPWLPARFATLGPLVLALLLVLALLWRGHGQSSSPTRSAHRD</sequence>
<keyword id="KW-0002">3D-structure</keyword>
<keyword id="KW-1043">Host membrane</keyword>
<keyword id="KW-1048">Host nucleus</keyword>
<keyword id="KW-0426">Late protein</keyword>
<keyword id="KW-0472">Membrane</keyword>
<keyword id="KW-0597">Phosphoprotein</keyword>
<keyword id="KW-1185">Reference proteome</keyword>
<keyword id="KW-0812">Transmembrane</keyword>
<keyword id="KW-1133">Transmembrane helix</keyword>
<feature type="chain" id="PRO_0000116034" description="Nuclear egress protein 2">
    <location>
        <begin position="1"/>
        <end position="397"/>
    </location>
</feature>
<feature type="topological domain" description="Perinuclear space" evidence="2">
    <location>
        <begin position="1"/>
        <end position="358"/>
    </location>
</feature>
<feature type="transmembrane region" description="Helical" evidence="2">
    <location>
        <begin position="359"/>
        <end position="381"/>
    </location>
</feature>
<feature type="topological domain" description="Nuclear" evidence="2">
    <location>
        <begin position="382"/>
        <end position="397"/>
    </location>
</feature>
<feature type="region of interest" description="Disordered" evidence="3">
    <location>
        <begin position="205"/>
        <end position="245"/>
    </location>
</feature>
<feature type="region of interest" description="Disordered" evidence="3">
    <location>
        <begin position="291"/>
        <end position="332"/>
    </location>
</feature>
<feature type="compositionally biased region" description="Low complexity" evidence="3">
    <location>
        <begin position="224"/>
        <end position="239"/>
    </location>
</feature>
<feature type="compositionally biased region" description="Low complexity" evidence="3">
    <location>
        <begin position="291"/>
        <end position="301"/>
    </location>
</feature>
<feature type="compositionally biased region" description="Basic residues" evidence="3">
    <location>
        <begin position="310"/>
        <end position="322"/>
    </location>
</feature>
<feature type="modified residue" description="Phosphoserine" evidence="4">
    <location>
        <position position="216"/>
    </location>
</feature>
<feature type="helix" evidence="8">
    <location>
        <begin position="1"/>
        <end position="19"/>
    </location>
</feature>
<feature type="strand" evidence="8">
    <location>
        <begin position="25"/>
        <end position="28"/>
    </location>
</feature>
<feature type="helix" evidence="8">
    <location>
        <begin position="31"/>
        <end position="33"/>
    </location>
</feature>
<feature type="strand" evidence="8">
    <location>
        <begin position="42"/>
        <end position="47"/>
    </location>
</feature>
<feature type="helix" evidence="8">
    <location>
        <begin position="55"/>
        <end position="66"/>
    </location>
</feature>
<feature type="strand" evidence="8">
    <location>
        <begin position="71"/>
        <end position="76"/>
    </location>
</feature>
<feature type="strand" evidence="8">
    <location>
        <begin position="81"/>
        <end position="88"/>
    </location>
</feature>
<feature type="strand" evidence="8">
    <location>
        <begin position="97"/>
        <end position="99"/>
    </location>
</feature>
<feature type="strand" evidence="8">
    <location>
        <begin position="102"/>
        <end position="107"/>
    </location>
</feature>
<feature type="strand" evidence="8">
    <location>
        <begin position="111"/>
        <end position="114"/>
    </location>
</feature>
<feature type="helix" evidence="8">
    <location>
        <begin position="116"/>
        <end position="122"/>
    </location>
</feature>
<feature type="strand" evidence="7">
    <location>
        <begin position="126"/>
        <end position="128"/>
    </location>
</feature>
<feature type="strand" evidence="8">
    <location>
        <begin position="130"/>
        <end position="137"/>
    </location>
</feature>
<feature type="strand" evidence="7">
    <location>
        <begin position="139"/>
        <end position="142"/>
    </location>
</feature>
<feature type="strand" evidence="8">
    <location>
        <begin position="143"/>
        <end position="152"/>
    </location>
</feature>
<feature type="helix" evidence="8">
    <location>
        <begin position="156"/>
        <end position="169"/>
    </location>
</feature>
<reference key="1">
    <citation type="journal article" date="1987" name="Virology">
        <title>Large-scale rearrangement of homologous regions in the genomes of HCMV and EBV.</title>
        <authorList>
            <person name="Kouzarides T."/>
            <person name="Bankier A.T."/>
            <person name="Satchwell S.C."/>
            <person name="Weston K.M."/>
            <person name="Tomlinson P."/>
            <person name="Barrell B.G."/>
        </authorList>
    </citation>
    <scope>NUCLEOTIDE SEQUENCE [GENOMIC DNA]</scope>
</reference>
<reference key="2">
    <citation type="journal article" date="1990" name="Curr. Top. Microbiol. Immunol.">
        <title>Analysis of the protein-coding content of the sequence of human cytomegalovirus strain AD169.</title>
        <authorList>
            <person name="Chee M.S."/>
            <person name="Bankier A.T."/>
            <person name="Beck S."/>
            <person name="Bohni R."/>
            <person name="Brown C.M."/>
            <person name="Cerny R."/>
            <person name="Horsnell T."/>
            <person name="Hutchison C.A. III"/>
            <person name="Kouzarides T."/>
            <person name="Martignetti J.A."/>
            <person name="Preddie E."/>
            <person name="Satchwell S.C."/>
            <person name="Tomlinson P."/>
            <person name="Weston K.M."/>
            <person name="Barrell B.G."/>
        </authorList>
    </citation>
    <scope>NUCLEOTIDE SEQUENCE [LARGE SCALE GENOMIC DNA]</scope>
</reference>
<reference key="3">
    <citation type="journal article" date="2003" name="J. Gen. Virol.">
        <title>The human cytomegalovirus genome revisited: comparison with the chimpanzee cytomegalovirus genome.</title>
        <authorList>
            <person name="Davison A.J."/>
            <person name="Dolan A."/>
            <person name="Akter P."/>
            <person name="Addison C."/>
            <person name="Dargan D.J."/>
            <person name="Alcendor D.J."/>
            <person name="McGeoch D.J."/>
            <person name="Hayward G.S."/>
        </authorList>
    </citation>
    <scope>GENOME REANNOTATION</scope>
</reference>
<reference key="4">
    <citation type="journal article" date="2003" name="J. Gen. Virol.">
        <authorList>
            <person name="Davison A.J."/>
            <person name="Dolan A."/>
            <person name="Akter P."/>
            <person name="Addison C."/>
            <person name="Dargan D.J."/>
            <person name="Alcendor D.J."/>
            <person name="McGeoch D.J."/>
            <person name="Hayward G.S."/>
        </authorList>
    </citation>
    <scope>ERRATUM OF PUBMED:12533697</scope>
</reference>
<reference key="5">
    <citation type="journal article" date="2004" name="J. Virol.">
        <title>Identification of proteins in human cytomegalovirus (HCMV) particles: the HCMV proteome.</title>
        <authorList>
            <person name="Varnum S.M."/>
            <person name="Streblow D.N."/>
            <person name="Monroe M.E."/>
            <person name="Smith P."/>
            <person name="Auberry K.J."/>
            <person name="Pasa-Tolic L."/>
            <person name="Wang D."/>
            <person name="Camp D.G. II"/>
            <person name="Rodland K."/>
            <person name="Wiley S."/>
            <person name="Britt W."/>
            <person name="Shenk T."/>
            <person name="Smith R.D."/>
            <person name="Nelson J.A."/>
        </authorList>
    </citation>
    <scope>IDENTIFICATION</scope>
</reference>
<reference key="6">
    <citation type="journal article" date="2004" name="J. Virol.">
        <authorList>
            <person name="Varnum S.M."/>
            <person name="Streblow D.N."/>
            <person name="Monroe M.E."/>
            <person name="Smith P."/>
            <person name="Auberry K.J."/>
            <person name="Pasa-Tolic L."/>
            <person name="Wang D."/>
            <person name="Camp D.G. II"/>
            <person name="Rodland K."/>
            <person name="Wiley S."/>
            <person name="Britt W."/>
            <person name="Shenk T."/>
            <person name="Smith R.D."/>
            <person name="Nelson J.A."/>
        </authorList>
    </citation>
    <scope>ERRATUM OF PUBMED:15452216</scope>
</reference>
<reference key="7">
    <citation type="journal article" date="2006" name="J. Virol.">
        <title>Common and specific properties of herpesvirus UL34/UL31 protein family members revealed by protein complementation assay.</title>
        <authorList>
            <person name="Schnee M."/>
            <person name="Ruzsics Z."/>
            <person name="Bubeck A."/>
            <person name="Koszinowski U.H."/>
        </authorList>
    </citation>
    <scope>INTERACTION WITH UL53</scope>
</reference>
<reference key="8">
    <citation type="journal article" date="2015" name="J. Virol.">
        <title>Human cytomegalovirus UL97 phosphorylates the viral nuclear egress complex.</title>
        <authorList>
            <person name="Sharma M."/>
            <person name="Bender B.J."/>
            <person name="Kamil J.P."/>
            <person name="Lye M.F."/>
            <person name="Pesola J.M."/>
            <person name="Reim N.I."/>
            <person name="Hogle J.M."/>
            <person name="Coen D.M."/>
        </authorList>
    </citation>
    <scope>FUNCTION</scope>
    <scope>PHOSPHORYLATION AT SER-216</scope>
    <scope>SUBCELLULAR LOCATION</scope>
    <scope>MUTAGENESIS OF SER-216</scope>
</reference>
<reference key="9">
    <citation type="journal article" date="2015" name="EMBO J.">
        <title>Unexpected features and mechanism of heterodimer formation of a herpesvirus nuclear egress complex.</title>
        <authorList>
            <person name="Lye M.F."/>
            <person name="Sharma M."/>
            <person name="El Omari K."/>
            <person name="Filman D.J."/>
            <person name="Schuermann J.P."/>
            <person name="Hogle J.M."/>
            <person name="Coen D.M."/>
        </authorList>
    </citation>
    <scope>X-RAY CRYSTALLOGRAPHY (2.47 ANGSTROMS) OF 4-168</scope>
    <scope>INTERACTION WITH NEC1</scope>
    <scope>SUBCELLULAR LOCATION</scope>
</reference>
<reference key="10">
    <citation type="journal article" date="2020" name="J. Biol. Chem.">
        <title>High-resolution crystal structures of two prototypical beta- and gamma-herpesviral nuclear egress complexes unravel the determinants of subfamily specificity.</title>
        <authorList>
            <person name="Muller Y.A."/>
            <person name="Hage S."/>
            <person name="Alkhashrom S."/>
            <person name="Hollriegl T."/>
            <person name="Weigert S."/>
            <person name="Dolles S."/>
            <person name="Hof K."/>
            <person name="Walzer S.A."/>
            <person name="Egerer-Sieber C."/>
            <person name="Conrad M."/>
            <person name="Holst S."/>
            <person name="Losing J."/>
            <person name="Sonntag E."/>
            <person name="Sticht H."/>
            <person name="Eichler J."/>
            <person name="Marschall M."/>
        </authorList>
    </citation>
    <scope>X-RAY CRYSTALLOGRAPHY (1.48 ANGSTROMS) OF 1-171</scope>
    <scope>INTERACTION WITH NEC1</scope>
    <scope>SUBCELLULAR LOCATION</scope>
</reference>
<proteinExistence type="evidence at protein level"/>
<accession>P16791</accession>
<accession>Q7M6N3</accession>
<protein>
    <recommendedName>
        <fullName evidence="2">Nuclear egress protein 2</fullName>
    </recommendedName>
</protein>
<evidence type="ECO:0000250" key="1">
    <source>
        <dbReference type="UniProtKB" id="Q6SW81"/>
    </source>
</evidence>
<evidence type="ECO:0000255" key="2">
    <source>
        <dbReference type="HAMAP-Rule" id="MF_04024"/>
    </source>
</evidence>
<evidence type="ECO:0000256" key="3">
    <source>
        <dbReference type="SAM" id="MobiDB-lite"/>
    </source>
</evidence>
<evidence type="ECO:0000269" key="4">
    <source>
    </source>
</evidence>
<evidence type="ECO:0000269" key="5">
    <source>
    </source>
</evidence>
<evidence type="ECO:0000269" key="6">
    <source>
    </source>
</evidence>
<evidence type="ECO:0007829" key="7">
    <source>
        <dbReference type="PDB" id="5DOB"/>
    </source>
</evidence>
<evidence type="ECO:0007829" key="8">
    <source>
        <dbReference type="PDB" id="6T3X"/>
    </source>
</evidence>
<organism>
    <name type="scientific">Human cytomegalovirus (strain AD169)</name>
    <name type="common">HHV-5</name>
    <name type="synonym">Human herpesvirus 5</name>
    <dbReference type="NCBI Taxonomy" id="10360"/>
    <lineage>
        <taxon>Viruses</taxon>
        <taxon>Duplodnaviria</taxon>
        <taxon>Heunggongvirae</taxon>
        <taxon>Peploviricota</taxon>
        <taxon>Herviviricetes</taxon>
        <taxon>Herpesvirales</taxon>
        <taxon>Orthoherpesviridae</taxon>
        <taxon>Betaherpesvirinae</taxon>
        <taxon>Cytomegalovirus</taxon>
        <taxon>Cytomegalovirus humanbeta5</taxon>
        <taxon>Human cytomegalovirus</taxon>
    </lineage>
</organism>
<organismHost>
    <name type="scientific">Homo sapiens</name>
    <name type="common">Human</name>
    <dbReference type="NCBI Taxonomy" id="9606"/>
</organismHost>
<name>NEC2_HCMVA</name>